<name>DNAA_HELAH</name>
<organism>
    <name type="scientific">Helicobacter acinonychis (strain Sheeba)</name>
    <dbReference type="NCBI Taxonomy" id="382638"/>
    <lineage>
        <taxon>Bacteria</taxon>
        <taxon>Pseudomonadati</taxon>
        <taxon>Campylobacterota</taxon>
        <taxon>Epsilonproteobacteria</taxon>
        <taxon>Campylobacterales</taxon>
        <taxon>Helicobacteraceae</taxon>
        <taxon>Helicobacter</taxon>
    </lineage>
</organism>
<feature type="chain" id="PRO_1000048654" description="Chromosomal replication initiator protein DnaA">
    <location>
        <begin position="1"/>
        <end position="449"/>
    </location>
</feature>
<feature type="region of interest" description="Domain I, interacts with DnaA modulators" evidence="1">
    <location>
        <begin position="1"/>
        <end position="75"/>
    </location>
</feature>
<feature type="region of interest" description="Domain II" evidence="1">
    <location>
        <begin position="75"/>
        <end position="106"/>
    </location>
</feature>
<feature type="region of interest" description="Domain III, AAA+ region" evidence="1">
    <location>
        <begin position="107"/>
        <end position="321"/>
    </location>
</feature>
<feature type="region of interest" description="Domain IV, binds dsDNA" evidence="1">
    <location>
        <begin position="322"/>
        <end position="449"/>
    </location>
</feature>
<feature type="binding site" evidence="1">
    <location>
        <position position="151"/>
    </location>
    <ligand>
        <name>ATP</name>
        <dbReference type="ChEBI" id="CHEBI:30616"/>
    </ligand>
</feature>
<feature type="binding site" evidence="1">
    <location>
        <position position="153"/>
    </location>
    <ligand>
        <name>ATP</name>
        <dbReference type="ChEBI" id="CHEBI:30616"/>
    </ligand>
</feature>
<feature type="binding site" evidence="1">
    <location>
        <position position="154"/>
    </location>
    <ligand>
        <name>ATP</name>
        <dbReference type="ChEBI" id="CHEBI:30616"/>
    </ligand>
</feature>
<feature type="binding site" evidence="1">
    <location>
        <position position="155"/>
    </location>
    <ligand>
        <name>ATP</name>
        <dbReference type="ChEBI" id="CHEBI:30616"/>
    </ligand>
</feature>
<gene>
    <name evidence="1" type="primary">dnaA</name>
    <name type="ordered locus">Hac_0001</name>
</gene>
<proteinExistence type="inferred from homology"/>
<comment type="function">
    <text evidence="1">Plays an essential role in the initiation and regulation of chromosomal replication. ATP-DnaA binds to the origin of replication (oriC) to initiate formation of the DNA replication initiation complex once per cell cycle. Binds the DnaA box (a 9 base pair repeat at the origin) and separates the double-stranded (ds)DNA. Forms a right-handed helical filament on oriC DNA; dsDNA binds to the exterior of the filament while single-stranded (ss)DNA is stabiized in the filament's interior. The ATP-DnaA-oriC complex binds and stabilizes one strand of the AT-rich DNA unwinding element (DUE), permitting loading of DNA polymerase. After initiation quickly degrades to an ADP-DnaA complex that is not apt for DNA replication. Binds acidic phospholipids.</text>
</comment>
<comment type="subunit">
    <text evidence="1">Oligomerizes as a right-handed, spiral filament on DNA at oriC.</text>
</comment>
<comment type="subcellular location">
    <subcellularLocation>
        <location evidence="1">Cytoplasm</location>
    </subcellularLocation>
</comment>
<comment type="domain">
    <text evidence="1">Domain I is involved in oligomerization and binding regulators, domain II is flexibile and of varying length in different bacteria, domain III forms the AAA+ region, while domain IV binds dsDNA.</text>
</comment>
<comment type="similarity">
    <text evidence="1">Belongs to the DnaA family.</text>
</comment>
<sequence>MDTNNDIEKRILELAKQQVSPIEYENYLSQLKYNPNASKSDIAFFYAPNMVLCSTITAKYSALLKEILSQNKVGMHLAHSVDVRIEVASKVHVSDHSNINYKATKSSIKDSYTFENFVVGSCNNTVYEIAKKIAQSDTPPYNPVLFYGGTGLGKTHILNAIGNHALEKHKKVVLVTSEDFLRDFLKHLNNRSMDSFKEKYRHCDFFLLDDAQFLQGKPQLEEEFFHTFNELHANNRQIVLISDRSPKNIAGLEDRLKSRFEWGITAKIMPPDLETKLSIVKQKCQLNKIILPEEVMEYIAQHISDNIRQMEGAIIKISVNANLMNAPIDLNLAKTVLEDLQKDQAEGSSLENILLAVAQSLNLKSSEIKVSSRQKNVALARKLVVYFARLYTPNPTLSLAQFLDLKDHSSISKMYSSIKKMLEEKNPFVLSLKEEIKNRLNELNDKKQH</sequence>
<dbReference type="EMBL" id="AM260522">
    <property type="protein sequence ID" value="CAJ98870.1"/>
    <property type="molecule type" value="Genomic_DNA"/>
</dbReference>
<dbReference type="RefSeq" id="WP_011576992.1">
    <property type="nucleotide sequence ID" value="NC_008229.1"/>
</dbReference>
<dbReference type="SMR" id="Q17ZQ6"/>
<dbReference type="STRING" id="382638.Hac_0001"/>
<dbReference type="GeneID" id="31757560"/>
<dbReference type="KEGG" id="hac:Hac_0001"/>
<dbReference type="eggNOG" id="COG0593">
    <property type="taxonomic scope" value="Bacteria"/>
</dbReference>
<dbReference type="HOGENOM" id="CLU_026910_0_1_7"/>
<dbReference type="OrthoDB" id="9807019at2"/>
<dbReference type="BioCyc" id="HACI382638:HAC_RS00005-MONOMER"/>
<dbReference type="Proteomes" id="UP000000775">
    <property type="component" value="Chromosome"/>
</dbReference>
<dbReference type="GO" id="GO:0005737">
    <property type="term" value="C:cytoplasm"/>
    <property type="evidence" value="ECO:0007669"/>
    <property type="project" value="UniProtKB-SubCell"/>
</dbReference>
<dbReference type="GO" id="GO:0005886">
    <property type="term" value="C:plasma membrane"/>
    <property type="evidence" value="ECO:0007669"/>
    <property type="project" value="TreeGrafter"/>
</dbReference>
<dbReference type="GO" id="GO:0005524">
    <property type="term" value="F:ATP binding"/>
    <property type="evidence" value="ECO:0007669"/>
    <property type="project" value="UniProtKB-UniRule"/>
</dbReference>
<dbReference type="GO" id="GO:0016887">
    <property type="term" value="F:ATP hydrolysis activity"/>
    <property type="evidence" value="ECO:0007669"/>
    <property type="project" value="InterPro"/>
</dbReference>
<dbReference type="GO" id="GO:0003688">
    <property type="term" value="F:DNA replication origin binding"/>
    <property type="evidence" value="ECO:0007669"/>
    <property type="project" value="UniProtKB-UniRule"/>
</dbReference>
<dbReference type="GO" id="GO:0008289">
    <property type="term" value="F:lipid binding"/>
    <property type="evidence" value="ECO:0007669"/>
    <property type="project" value="UniProtKB-KW"/>
</dbReference>
<dbReference type="GO" id="GO:0006270">
    <property type="term" value="P:DNA replication initiation"/>
    <property type="evidence" value="ECO:0007669"/>
    <property type="project" value="UniProtKB-UniRule"/>
</dbReference>
<dbReference type="GO" id="GO:0006275">
    <property type="term" value="P:regulation of DNA replication"/>
    <property type="evidence" value="ECO:0007669"/>
    <property type="project" value="UniProtKB-UniRule"/>
</dbReference>
<dbReference type="CDD" id="cd00009">
    <property type="entry name" value="AAA"/>
    <property type="match status" value="1"/>
</dbReference>
<dbReference type="CDD" id="cd06571">
    <property type="entry name" value="Bac_DnaA_C"/>
    <property type="match status" value="1"/>
</dbReference>
<dbReference type="FunFam" id="1.10.1750.10:FF:000007">
    <property type="entry name" value="Chromosomal replication initiator protein DnaA"/>
    <property type="match status" value="1"/>
</dbReference>
<dbReference type="Gene3D" id="1.10.1750.10">
    <property type="match status" value="1"/>
</dbReference>
<dbReference type="Gene3D" id="1.10.8.60">
    <property type="match status" value="1"/>
</dbReference>
<dbReference type="Gene3D" id="3.30.300.180">
    <property type="match status" value="1"/>
</dbReference>
<dbReference type="Gene3D" id="3.40.50.300">
    <property type="entry name" value="P-loop containing nucleotide triphosphate hydrolases"/>
    <property type="match status" value="1"/>
</dbReference>
<dbReference type="HAMAP" id="MF_00377">
    <property type="entry name" value="DnaA_bact"/>
    <property type="match status" value="1"/>
</dbReference>
<dbReference type="InterPro" id="IPR003593">
    <property type="entry name" value="AAA+_ATPase"/>
</dbReference>
<dbReference type="InterPro" id="IPR001957">
    <property type="entry name" value="Chromosome_initiator_DnaA"/>
</dbReference>
<dbReference type="InterPro" id="IPR020591">
    <property type="entry name" value="Chromosome_initiator_DnaA-like"/>
</dbReference>
<dbReference type="InterPro" id="IPR018312">
    <property type="entry name" value="Chromosome_initiator_DnaA_CS"/>
</dbReference>
<dbReference type="InterPro" id="IPR013159">
    <property type="entry name" value="DnaA_C"/>
</dbReference>
<dbReference type="InterPro" id="IPR013317">
    <property type="entry name" value="DnaA_dom"/>
</dbReference>
<dbReference type="InterPro" id="IPR038454">
    <property type="entry name" value="DnaA_N_sf"/>
</dbReference>
<dbReference type="InterPro" id="IPR027417">
    <property type="entry name" value="P-loop_NTPase"/>
</dbReference>
<dbReference type="InterPro" id="IPR010921">
    <property type="entry name" value="Trp_repressor/repl_initiator"/>
</dbReference>
<dbReference type="NCBIfam" id="TIGR00362">
    <property type="entry name" value="DnaA"/>
    <property type="match status" value="1"/>
</dbReference>
<dbReference type="PANTHER" id="PTHR30050">
    <property type="entry name" value="CHROMOSOMAL REPLICATION INITIATOR PROTEIN DNAA"/>
    <property type="match status" value="1"/>
</dbReference>
<dbReference type="PANTHER" id="PTHR30050:SF2">
    <property type="entry name" value="CHROMOSOMAL REPLICATION INITIATOR PROTEIN DNAA"/>
    <property type="match status" value="1"/>
</dbReference>
<dbReference type="Pfam" id="PF00308">
    <property type="entry name" value="Bac_DnaA"/>
    <property type="match status" value="1"/>
</dbReference>
<dbReference type="Pfam" id="PF08299">
    <property type="entry name" value="Bac_DnaA_C"/>
    <property type="match status" value="1"/>
</dbReference>
<dbReference type="PRINTS" id="PR00051">
    <property type="entry name" value="DNAA"/>
</dbReference>
<dbReference type="SMART" id="SM00382">
    <property type="entry name" value="AAA"/>
    <property type="match status" value="1"/>
</dbReference>
<dbReference type="SMART" id="SM00760">
    <property type="entry name" value="Bac_DnaA_C"/>
    <property type="match status" value="1"/>
</dbReference>
<dbReference type="SUPFAM" id="SSF52540">
    <property type="entry name" value="P-loop containing nucleoside triphosphate hydrolases"/>
    <property type="match status" value="1"/>
</dbReference>
<dbReference type="SUPFAM" id="SSF48295">
    <property type="entry name" value="TrpR-like"/>
    <property type="match status" value="1"/>
</dbReference>
<dbReference type="PROSITE" id="PS01008">
    <property type="entry name" value="DNAA"/>
    <property type="match status" value="1"/>
</dbReference>
<evidence type="ECO:0000255" key="1">
    <source>
        <dbReference type="HAMAP-Rule" id="MF_00377"/>
    </source>
</evidence>
<accession>Q17ZQ6</accession>
<keyword id="KW-0067">ATP-binding</keyword>
<keyword id="KW-0963">Cytoplasm</keyword>
<keyword id="KW-0235">DNA replication</keyword>
<keyword id="KW-0238">DNA-binding</keyword>
<keyword id="KW-0446">Lipid-binding</keyword>
<keyword id="KW-0547">Nucleotide-binding</keyword>
<protein>
    <recommendedName>
        <fullName evidence="1">Chromosomal replication initiator protein DnaA</fullName>
    </recommendedName>
</protein>
<reference key="1">
    <citation type="journal article" date="2006" name="PLoS Genet.">
        <title>Who ate whom? Adaptive Helicobacter genomic changes that accompanied a host jump from early humans to large felines.</title>
        <authorList>
            <person name="Eppinger M."/>
            <person name="Baar C."/>
            <person name="Linz B."/>
            <person name="Raddatz G."/>
            <person name="Lanz C."/>
            <person name="Keller H."/>
            <person name="Morelli G."/>
            <person name="Gressmann H."/>
            <person name="Achtman M."/>
            <person name="Schuster S.C."/>
        </authorList>
    </citation>
    <scope>NUCLEOTIDE SEQUENCE [LARGE SCALE GENOMIC DNA]</scope>
    <source>
        <strain>Sheeba</strain>
    </source>
</reference>